<protein>
    <recommendedName>
        <fullName evidence="2">U1 small nuclear ribonucleoprotein C</fullName>
        <shortName evidence="2">U1 snRNP C</shortName>
        <shortName evidence="2">U1-C</shortName>
        <shortName evidence="2">U1C</shortName>
    </recommendedName>
</protein>
<sequence length="159" mass="17394">MPKFYCDYCDTYLTHDSPSVRKTHCSGRKHKENVKDYYQKWMEEQAQSLIDKTTAAFQQGKIPPTPFSAPPPAGAMIPPPPSLPGPPRPGMMPAPHMGGPPMMPMMGPPPPGMMPVGPAPGMRPPMGGHMPMMPGPPMMRPPARPMMVPTRPGMTRPDR</sequence>
<evidence type="ECO:0000250" key="1">
    <source>
        <dbReference type="UniProtKB" id="P09234"/>
    </source>
</evidence>
<evidence type="ECO:0000255" key="2">
    <source>
        <dbReference type="HAMAP-Rule" id="MF_03153"/>
    </source>
</evidence>
<evidence type="ECO:0000256" key="3">
    <source>
        <dbReference type="SAM" id="MobiDB-lite"/>
    </source>
</evidence>
<name>RU1C_CANLF</name>
<feature type="chain" id="PRO_0000414249" description="U1 small nuclear ribonucleoprotein C">
    <location>
        <begin position="1"/>
        <end position="159"/>
    </location>
</feature>
<feature type="zinc finger region" description="Matrin-type" evidence="2">
    <location>
        <begin position="4"/>
        <end position="36"/>
    </location>
</feature>
<feature type="region of interest" description="Disordered" evidence="3">
    <location>
        <begin position="62"/>
        <end position="96"/>
    </location>
</feature>
<feature type="region of interest" description="Disordered" evidence="3">
    <location>
        <begin position="140"/>
        <end position="159"/>
    </location>
</feature>
<feature type="compositionally biased region" description="Pro residues" evidence="3">
    <location>
        <begin position="63"/>
        <end position="92"/>
    </location>
</feature>
<feature type="modified residue" description="Phosphotyrosine" evidence="1">
    <location>
        <position position="8"/>
    </location>
</feature>
<feature type="modified residue" description="Phosphoserine" evidence="1">
    <location>
        <position position="17"/>
    </location>
</feature>
<feature type="modified residue" description="N6-acetyllysine" evidence="1">
    <location>
        <position position="52"/>
    </location>
</feature>
<dbReference type="RefSeq" id="NP_001300792.1">
    <property type="nucleotide sequence ID" value="NM_001313863.1"/>
</dbReference>
<dbReference type="BMRB" id="E2RGI3"/>
<dbReference type="SMR" id="E2RGI3"/>
<dbReference type="FunCoup" id="E2RGI3">
    <property type="interactions" value="2159"/>
</dbReference>
<dbReference type="STRING" id="9615.ENSCAFP00000001764"/>
<dbReference type="PaxDb" id="9612-ENSCAFP00000042872"/>
<dbReference type="Ensembl" id="ENSCAFT00000101099.1">
    <property type="protein sequence ID" value="ENSCAFP00000069734.1"/>
    <property type="gene ID" value="ENSCAFG00000057151.1"/>
</dbReference>
<dbReference type="Ensembl" id="ENSCAFT00030032340.1">
    <property type="protein sequence ID" value="ENSCAFP00030028203.1"/>
    <property type="gene ID" value="ENSCAFG00030017546.1"/>
</dbReference>
<dbReference type="Ensembl" id="ENSCAFT00040022490.1">
    <property type="protein sequence ID" value="ENSCAFP00040019494.1"/>
    <property type="gene ID" value="ENSCAFG00040012171.1"/>
</dbReference>
<dbReference type="Ensembl" id="ENSCAFT00845048304.1">
    <property type="protein sequence ID" value="ENSCAFP00845037892.1"/>
    <property type="gene ID" value="ENSCAFG00845027420.1"/>
</dbReference>
<dbReference type="GeneID" id="608109"/>
<dbReference type="KEGG" id="cfa:608109"/>
<dbReference type="CTD" id="6631"/>
<dbReference type="VEuPathDB" id="HostDB:ENSCAFG00845027420"/>
<dbReference type="eggNOG" id="KOG3454">
    <property type="taxonomic scope" value="Eukaryota"/>
</dbReference>
<dbReference type="GeneTree" id="ENSGT00730000110997"/>
<dbReference type="InParanoid" id="E2RGI3"/>
<dbReference type="OrthoDB" id="76567at2759"/>
<dbReference type="Reactome" id="R-CFA-72163">
    <property type="pathway name" value="mRNA Splicing - Major Pathway"/>
</dbReference>
<dbReference type="Proteomes" id="UP000002254">
    <property type="component" value="Chromosome 12"/>
</dbReference>
<dbReference type="Proteomes" id="UP000694429">
    <property type="component" value="Chromosome 12"/>
</dbReference>
<dbReference type="Proteomes" id="UP000694542">
    <property type="component" value="Chromosome 12"/>
</dbReference>
<dbReference type="Proteomes" id="UP000805418">
    <property type="component" value="Chromosome 12"/>
</dbReference>
<dbReference type="Bgee" id="ENSCAFG00000001231">
    <property type="expression patterns" value="Expressed in testis and 51 other cell types or tissues"/>
</dbReference>
<dbReference type="GO" id="GO:0015030">
    <property type="term" value="C:Cajal body"/>
    <property type="evidence" value="ECO:0007669"/>
    <property type="project" value="Ensembl"/>
</dbReference>
<dbReference type="GO" id="GO:0000243">
    <property type="term" value="C:commitment complex"/>
    <property type="evidence" value="ECO:0007669"/>
    <property type="project" value="UniProtKB-UniRule"/>
</dbReference>
<dbReference type="GO" id="GO:0005685">
    <property type="term" value="C:U1 snRNP"/>
    <property type="evidence" value="ECO:0000250"/>
    <property type="project" value="UniProtKB"/>
</dbReference>
<dbReference type="GO" id="GO:0071004">
    <property type="term" value="C:U2-type prespliceosome"/>
    <property type="evidence" value="ECO:0007669"/>
    <property type="project" value="UniProtKB-UniRule"/>
</dbReference>
<dbReference type="GO" id="GO:0003729">
    <property type="term" value="F:mRNA binding"/>
    <property type="evidence" value="ECO:0007669"/>
    <property type="project" value="UniProtKB-UniRule"/>
</dbReference>
<dbReference type="GO" id="GO:0030627">
    <property type="term" value="F:pre-mRNA 5'-splice site binding"/>
    <property type="evidence" value="ECO:0000318"/>
    <property type="project" value="GO_Central"/>
</dbReference>
<dbReference type="GO" id="GO:0042803">
    <property type="term" value="F:protein homodimerization activity"/>
    <property type="evidence" value="ECO:0007669"/>
    <property type="project" value="Ensembl"/>
</dbReference>
<dbReference type="GO" id="GO:0003727">
    <property type="term" value="F:single-stranded RNA binding"/>
    <property type="evidence" value="ECO:0007669"/>
    <property type="project" value="Ensembl"/>
</dbReference>
<dbReference type="GO" id="GO:0030619">
    <property type="term" value="F:U1 snRNA binding"/>
    <property type="evidence" value="ECO:0007669"/>
    <property type="project" value="UniProtKB-UniRule"/>
</dbReference>
<dbReference type="GO" id="GO:0008270">
    <property type="term" value="F:zinc ion binding"/>
    <property type="evidence" value="ECO:0007669"/>
    <property type="project" value="UniProtKB-UniRule"/>
</dbReference>
<dbReference type="GO" id="GO:0000395">
    <property type="term" value="P:mRNA 5'-splice site recognition"/>
    <property type="evidence" value="ECO:0000318"/>
    <property type="project" value="GO_Central"/>
</dbReference>
<dbReference type="GO" id="GO:0000387">
    <property type="term" value="P:spliceosomal snRNP assembly"/>
    <property type="evidence" value="ECO:0007669"/>
    <property type="project" value="UniProtKB-UniRule"/>
</dbReference>
<dbReference type="FunFam" id="3.30.160.60:FF:000059">
    <property type="entry name" value="U1 small nuclear ribonucleoprotein C"/>
    <property type="match status" value="1"/>
</dbReference>
<dbReference type="Gene3D" id="3.30.160.60">
    <property type="entry name" value="Classic Zinc Finger"/>
    <property type="match status" value="1"/>
</dbReference>
<dbReference type="HAMAP" id="MF_03153">
    <property type="entry name" value="U1_C"/>
    <property type="match status" value="1"/>
</dbReference>
<dbReference type="InterPro" id="IPR000690">
    <property type="entry name" value="Matrin/U1-C_Znf_C2H2"/>
</dbReference>
<dbReference type="InterPro" id="IPR003604">
    <property type="entry name" value="Matrin/U1-like-C_Znf_C2H2"/>
</dbReference>
<dbReference type="InterPro" id="IPR013085">
    <property type="entry name" value="U1-CZ_Znf_C2H2"/>
</dbReference>
<dbReference type="InterPro" id="IPR017340">
    <property type="entry name" value="U1_snRNP-C"/>
</dbReference>
<dbReference type="InterPro" id="IPR036236">
    <property type="entry name" value="Znf_C2H2_sf"/>
</dbReference>
<dbReference type="PANTHER" id="PTHR31148">
    <property type="entry name" value="U1 SMALL NUCLEAR RIBONUCLEOPROTEIN C"/>
    <property type="match status" value="1"/>
</dbReference>
<dbReference type="PANTHER" id="PTHR31148:SF1">
    <property type="entry name" value="U1 SMALL NUCLEAR RIBONUCLEOPROTEIN C"/>
    <property type="match status" value="1"/>
</dbReference>
<dbReference type="Pfam" id="PF06220">
    <property type="entry name" value="zf-U1"/>
    <property type="match status" value="1"/>
</dbReference>
<dbReference type="PIRSF" id="PIRSF037969">
    <property type="entry name" value="U1_snRNP-C"/>
    <property type="match status" value="1"/>
</dbReference>
<dbReference type="SMART" id="SM00451">
    <property type="entry name" value="ZnF_U1"/>
    <property type="match status" value="1"/>
</dbReference>
<dbReference type="SUPFAM" id="SSF57667">
    <property type="entry name" value="beta-beta-alpha zinc fingers"/>
    <property type="match status" value="1"/>
</dbReference>
<dbReference type="PROSITE" id="PS50171">
    <property type="entry name" value="ZF_MATRIN"/>
    <property type="match status" value="1"/>
</dbReference>
<reference key="1">
    <citation type="journal article" date="2005" name="Nature">
        <title>Genome sequence, comparative analysis and haplotype structure of the domestic dog.</title>
        <authorList>
            <person name="Lindblad-Toh K."/>
            <person name="Wade C.M."/>
            <person name="Mikkelsen T.S."/>
            <person name="Karlsson E.K."/>
            <person name="Jaffe D.B."/>
            <person name="Kamal M."/>
            <person name="Clamp M."/>
            <person name="Chang J.L."/>
            <person name="Kulbokas E.J. III"/>
            <person name="Zody M.C."/>
            <person name="Mauceli E."/>
            <person name="Xie X."/>
            <person name="Breen M."/>
            <person name="Wayne R.K."/>
            <person name="Ostrander E.A."/>
            <person name="Ponting C.P."/>
            <person name="Galibert F."/>
            <person name="Smith D.R."/>
            <person name="deJong P.J."/>
            <person name="Kirkness E.F."/>
            <person name="Alvarez P."/>
            <person name="Biagi T."/>
            <person name="Brockman W."/>
            <person name="Butler J."/>
            <person name="Chin C.-W."/>
            <person name="Cook A."/>
            <person name="Cuff J."/>
            <person name="Daly M.J."/>
            <person name="DeCaprio D."/>
            <person name="Gnerre S."/>
            <person name="Grabherr M."/>
            <person name="Kellis M."/>
            <person name="Kleber M."/>
            <person name="Bardeleben C."/>
            <person name="Goodstadt L."/>
            <person name="Heger A."/>
            <person name="Hitte C."/>
            <person name="Kim L."/>
            <person name="Koepfli K.-P."/>
            <person name="Parker H.G."/>
            <person name="Pollinger J.P."/>
            <person name="Searle S.M.J."/>
            <person name="Sutter N.B."/>
            <person name="Thomas R."/>
            <person name="Webber C."/>
            <person name="Baldwin J."/>
            <person name="Abebe A."/>
            <person name="Abouelleil A."/>
            <person name="Aftuck L."/>
            <person name="Ait-Zahra M."/>
            <person name="Aldredge T."/>
            <person name="Allen N."/>
            <person name="An P."/>
            <person name="Anderson S."/>
            <person name="Antoine C."/>
            <person name="Arachchi H."/>
            <person name="Aslam A."/>
            <person name="Ayotte L."/>
            <person name="Bachantsang P."/>
            <person name="Barry A."/>
            <person name="Bayul T."/>
            <person name="Benamara M."/>
            <person name="Berlin A."/>
            <person name="Bessette D."/>
            <person name="Blitshteyn B."/>
            <person name="Bloom T."/>
            <person name="Blye J."/>
            <person name="Boguslavskiy L."/>
            <person name="Bonnet C."/>
            <person name="Boukhgalter B."/>
            <person name="Brown A."/>
            <person name="Cahill P."/>
            <person name="Calixte N."/>
            <person name="Camarata J."/>
            <person name="Cheshatsang Y."/>
            <person name="Chu J."/>
            <person name="Citroen M."/>
            <person name="Collymore A."/>
            <person name="Cooke P."/>
            <person name="Dawoe T."/>
            <person name="Daza R."/>
            <person name="Decktor K."/>
            <person name="DeGray S."/>
            <person name="Dhargay N."/>
            <person name="Dooley K."/>
            <person name="Dooley K."/>
            <person name="Dorje P."/>
            <person name="Dorjee K."/>
            <person name="Dorris L."/>
            <person name="Duffey N."/>
            <person name="Dupes A."/>
            <person name="Egbiremolen O."/>
            <person name="Elong R."/>
            <person name="Falk J."/>
            <person name="Farina A."/>
            <person name="Faro S."/>
            <person name="Ferguson D."/>
            <person name="Ferreira P."/>
            <person name="Fisher S."/>
            <person name="FitzGerald M."/>
            <person name="Foley K."/>
            <person name="Foley C."/>
            <person name="Franke A."/>
            <person name="Friedrich D."/>
            <person name="Gage D."/>
            <person name="Garber M."/>
            <person name="Gearin G."/>
            <person name="Giannoukos G."/>
            <person name="Goode T."/>
            <person name="Goyette A."/>
            <person name="Graham J."/>
            <person name="Grandbois E."/>
            <person name="Gyaltsen K."/>
            <person name="Hafez N."/>
            <person name="Hagopian D."/>
            <person name="Hagos B."/>
            <person name="Hall J."/>
            <person name="Healy C."/>
            <person name="Hegarty R."/>
            <person name="Honan T."/>
            <person name="Horn A."/>
            <person name="Houde N."/>
            <person name="Hughes L."/>
            <person name="Hunnicutt L."/>
            <person name="Husby M."/>
            <person name="Jester B."/>
            <person name="Jones C."/>
            <person name="Kamat A."/>
            <person name="Kanga B."/>
            <person name="Kells C."/>
            <person name="Khazanovich D."/>
            <person name="Kieu A.C."/>
            <person name="Kisner P."/>
            <person name="Kumar M."/>
            <person name="Lance K."/>
            <person name="Landers T."/>
            <person name="Lara M."/>
            <person name="Lee W."/>
            <person name="Leger J.-P."/>
            <person name="Lennon N."/>
            <person name="Leuper L."/>
            <person name="LeVine S."/>
            <person name="Liu J."/>
            <person name="Liu X."/>
            <person name="Lokyitsang Y."/>
            <person name="Lokyitsang T."/>
            <person name="Lui A."/>
            <person name="Macdonald J."/>
            <person name="Major J."/>
            <person name="Marabella R."/>
            <person name="Maru K."/>
            <person name="Matthews C."/>
            <person name="McDonough S."/>
            <person name="Mehta T."/>
            <person name="Meldrim J."/>
            <person name="Melnikov A."/>
            <person name="Meneus L."/>
            <person name="Mihalev A."/>
            <person name="Mihova T."/>
            <person name="Miller K."/>
            <person name="Mittelman R."/>
            <person name="Mlenga V."/>
            <person name="Mulrain L."/>
            <person name="Munson G."/>
            <person name="Navidi A."/>
            <person name="Naylor J."/>
            <person name="Nguyen T."/>
            <person name="Nguyen N."/>
            <person name="Nguyen C."/>
            <person name="Nguyen T."/>
            <person name="Nicol R."/>
            <person name="Norbu N."/>
            <person name="Norbu C."/>
            <person name="Novod N."/>
            <person name="Nyima T."/>
            <person name="Olandt P."/>
            <person name="O'Neill B."/>
            <person name="O'Neill K."/>
            <person name="Osman S."/>
            <person name="Oyono L."/>
            <person name="Patti C."/>
            <person name="Perrin D."/>
            <person name="Phunkhang P."/>
            <person name="Pierre F."/>
            <person name="Priest M."/>
            <person name="Rachupka A."/>
            <person name="Raghuraman S."/>
            <person name="Rameau R."/>
            <person name="Ray V."/>
            <person name="Raymond C."/>
            <person name="Rege F."/>
            <person name="Rise C."/>
            <person name="Rogers J."/>
            <person name="Rogov P."/>
            <person name="Sahalie J."/>
            <person name="Settipalli S."/>
            <person name="Sharpe T."/>
            <person name="Shea T."/>
            <person name="Sheehan M."/>
            <person name="Sherpa N."/>
            <person name="Shi J."/>
            <person name="Shih D."/>
            <person name="Sloan J."/>
            <person name="Smith C."/>
            <person name="Sparrow T."/>
            <person name="Stalker J."/>
            <person name="Stange-Thomann N."/>
            <person name="Stavropoulos S."/>
            <person name="Stone C."/>
            <person name="Stone S."/>
            <person name="Sykes S."/>
            <person name="Tchuinga P."/>
            <person name="Tenzing P."/>
            <person name="Tesfaye S."/>
            <person name="Thoulutsang D."/>
            <person name="Thoulutsang Y."/>
            <person name="Topham K."/>
            <person name="Topping I."/>
            <person name="Tsamla T."/>
            <person name="Vassiliev H."/>
            <person name="Venkataraman V."/>
            <person name="Vo A."/>
            <person name="Wangchuk T."/>
            <person name="Wangdi T."/>
            <person name="Weiand M."/>
            <person name="Wilkinson J."/>
            <person name="Wilson A."/>
            <person name="Yadav S."/>
            <person name="Yang S."/>
            <person name="Yang X."/>
            <person name="Young G."/>
            <person name="Yu Q."/>
            <person name="Zainoun J."/>
            <person name="Zembek L."/>
            <person name="Zimmer A."/>
            <person name="Lander E.S."/>
        </authorList>
    </citation>
    <scope>NUCLEOTIDE SEQUENCE [LARGE SCALE GENOMIC DNA]</scope>
    <source>
        <strain>Boxer</strain>
    </source>
</reference>
<proteinExistence type="inferred from homology"/>
<gene>
    <name evidence="2" type="primary">SNRPC</name>
</gene>
<comment type="function">
    <text evidence="2">Component of the spliceosomal U1 snRNP, which is essential for recognition of the pre-mRNA 5' splice-site and the subsequent assembly of the spliceosome. SNRPC/U1-C is directly involved in initial 5' splice-site recognition for both constitutive and regulated alternative splicing. The interaction with the 5' splice-site seems to precede base-pairing between the pre-mRNA and the U1 snRNA. Stimulates commitment or early (E) complex formation by stabilizing the base pairing of the 5' end of the U1 snRNA and the 5' splice-site region.</text>
</comment>
<comment type="subunit">
    <text evidence="1 2">Component of the U1 snRNP. The U1 snRNP is composed of the U1 snRNA and the 7 core Sm proteins SNRPB, SNRPD1, SNRPD2, SNRPD3, SNRPE, SNRPF and SNRPG that assemble in a heptameric protein ring on the Sm site of the small nuclear RNA to form the core snRNP, and at least 3 U1 snRNP-specific proteins SNRNP70/U1-70K, SNRPA/U1-A and SNRPC/U1-C. SNRPC/U1-C interacts with U1 snRNA and the 5' splice-site region of the pre-mRNA (By similarity). Interacts (via N-terminus) with TIA1 (via C-terminus); thereby promoting spliceosomal U1 snRNP recruitment to 5' splice sites (By similarity).</text>
</comment>
<comment type="subcellular location">
    <subcellularLocation>
        <location evidence="2">Nucleus</location>
    </subcellularLocation>
</comment>
<comment type="similarity">
    <text evidence="2">Belongs to the U1 small nuclear ribonucleoprotein C family.</text>
</comment>
<accession>E2RGI3</accession>
<organism>
    <name type="scientific">Canis lupus familiaris</name>
    <name type="common">Dog</name>
    <name type="synonym">Canis familiaris</name>
    <dbReference type="NCBI Taxonomy" id="9615"/>
    <lineage>
        <taxon>Eukaryota</taxon>
        <taxon>Metazoa</taxon>
        <taxon>Chordata</taxon>
        <taxon>Craniata</taxon>
        <taxon>Vertebrata</taxon>
        <taxon>Euteleostomi</taxon>
        <taxon>Mammalia</taxon>
        <taxon>Eutheria</taxon>
        <taxon>Laurasiatheria</taxon>
        <taxon>Carnivora</taxon>
        <taxon>Caniformia</taxon>
        <taxon>Canidae</taxon>
        <taxon>Canis</taxon>
    </lineage>
</organism>
<keyword id="KW-0007">Acetylation</keyword>
<keyword id="KW-0479">Metal-binding</keyword>
<keyword id="KW-0539">Nucleus</keyword>
<keyword id="KW-0597">Phosphoprotein</keyword>
<keyword id="KW-1185">Reference proteome</keyword>
<keyword id="KW-0687">Ribonucleoprotein</keyword>
<keyword id="KW-0694">RNA-binding</keyword>
<keyword id="KW-0862">Zinc</keyword>
<keyword id="KW-0863">Zinc-finger</keyword>